<accession>A3M7F7</accession>
<name>SURE_ACIBT</name>
<proteinExistence type="inferred from homology"/>
<evidence type="ECO:0000255" key="1">
    <source>
        <dbReference type="HAMAP-Rule" id="MF_00060"/>
    </source>
</evidence>
<reference key="1">
    <citation type="journal article" date="2007" name="Genes Dev.">
        <title>New insights into Acinetobacter baumannii pathogenesis revealed by high-density pyrosequencing and transposon mutagenesis.</title>
        <authorList>
            <person name="Smith M.G."/>
            <person name="Gianoulis T.A."/>
            <person name="Pukatzki S."/>
            <person name="Mekalanos J.J."/>
            <person name="Ornston L.N."/>
            <person name="Gerstein M."/>
            <person name="Snyder M."/>
        </authorList>
    </citation>
    <scope>NUCLEOTIDE SEQUENCE [LARGE SCALE GENOMIC DNA]</scope>
    <source>
        <strain>ATCC 17978 / DSM 105126 / CIP 53.77 / LMG 1025 / NCDC KC755 / 5377</strain>
    </source>
</reference>
<keyword id="KW-0963">Cytoplasm</keyword>
<keyword id="KW-0378">Hydrolase</keyword>
<keyword id="KW-0479">Metal-binding</keyword>
<keyword id="KW-0547">Nucleotide-binding</keyword>
<organism>
    <name type="scientific">Acinetobacter baumannii (strain ATCC 17978 / DSM 105126 / CIP 53.77 / LMG 1025 / NCDC KC755 / 5377)</name>
    <dbReference type="NCBI Taxonomy" id="400667"/>
    <lineage>
        <taxon>Bacteria</taxon>
        <taxon>Pseudomonadati</taxon>
        <taxon>Pseudomonadota</taxon>
        <taxon>Gammaproteobacteria</taxon>
        <taxon>Moraxellales</taxon>
        <taxon>Moraxellaceae</taxon>
        <taxon>Acinetobacter</taxon>
        <taxon>Acinetobacter calcoaceticus/baumannii complex</taxon>
    </lineage>
</organism>
<comment type="function">
    <text evidence="1">Nucleotidase that shows phosphatase activity on nucleoside 5'-monophosphates.</text>
</comment>
<comment type="catalytic activity">
    <reaction evidence="1">
        <text>a ribonucleoside 5'-phosphate + H2O = a ribonucleoside + phosphate</text>
        <dbReference type="Rhea" id="RHEA:12484"/>
        <dbReference type="ChEBI" id="CHEBI:15377"/>
        <dbReference type="ChEBI" id="CHEBI:18254"/>
        <dbReference type="ChEBI" id="CHEBI:43474"/>
        <dbReference type="ChEBI" id="CHEBI:58043"/>
        <dbReference type="EC" id="3.1.3.5"/>
    </reaction>
</comment>
<comment type="cofactor">
    <cofactor evidence="1">
        <name>a divalent metal cation</name>
        <dbReference type="ChEBI" id="CHEBI:60240"/>
    </cofactor>
    <text evidence="1">Binds 1 divalent metal cation per subunit.</text>
</comment>
<comment type="subcellular location">
    <subcellularLocation>
        <location evidence="1">Cytoplasm</location>
    </subcellularLocation>
</comment>
<comment type="similarity">
    <text evidence="1">Belongs to the SurE nucleotidase family.</text>
</comment>
<feature type="chain" id="PRO_1000091980" description="5'-nucleotidase SurE">
    <location>
        <begin position="1"/>
        <end position="255"/>
    </location>
</feature>
<feature type="binding site" evidence="1">
    <location>
        <position position="8"/>
    </location>
    <ligand>
        <name>a divalent metal cation</name>
        <dbReference type="ChEBI" id="CHEBI:60240"/>
    </ligand>
</feature>
<feature type="binding site" evidence="1">
    <location>
        <position position="9"/>
    </location>
    <ligand>
        <name>a divalent metal cation</name>
        <dbReference type="ChEBI" id="CHEBI:60240"/>
    </ligand>
</feature>
<feature type="binding site" evidence="1">
    <location>
        <position position="39"/>
    </location>
    <ligand>
        <name>a divalent metal cation</name>
        <dbReference type="ChEBI" id="CHEBI:60240"/>
    </ligand>
</feature>
<feature type="binding site" evidence="1">
    <location>
        <position position="91"/>
    </location>
    <ligand>
        <name>a divalent metal cation</name>
        <dbReference type="ChEBI" id="CHEBI:60240"/>
    </ligand>
</feature>
<gene>
    <name evidence="1" type="primary">surE</name>
    <name type="ordered locus">A1S_2433</name>
</gene>
<dbReference type="EC" id="3.1.3.5" evidence="1"/>
<dbReference type="EMBL" id="CP000521">
    <property type="protein sequence ID" value="ABO12851.2"/>
    <property type="molecule type" value="Genomic_DNA"/>
</dbReference>
<dbReference type="RefSeq" id="WP_001023217.1">
    <property type="nucleotide sequence ID" value="NZ_CACVBA010000001.1"/>
</dbReference>
<dbReference type="SMR" id="A3M7F7"/>
<dbReference type="KEGG" id="acb:A1S_2433"/>
<dbReference type="HOGENOM" id="CLU_045192_1_2_6"/>
<dbReference type="GO" id="GO:0005737">
    <property type="term" value="C:cytoplasm"/>
    <property type="evidence" value="ECO:0007669"/>
    <property type="project" value="UniProtKB-SubCell"/>
</dbReference>
<dbReference type="GO" id="GO:0008254">
    <property type="term" value="F:3'-nucleotidase activity"/>
    <property type="evidence" value="ECO:0007669"/>
    <property type="project" value="TreeGrafter"/>
</dbReference>
<dbReference type="GO" id="GO:0008253">
    <property type="term" value="F:5'-nucleotidase activity"/>
    <property type="evidence" value="ECO:0007669"/>
    <property type="project" value="UniProtKB-UniRule"/>
</dbReference>
<dbReference type="GO" id="GO:0004309">
    <property type="term" value="F:exopolyphosphatase activity"/>
    <property type="evidence" value="ECO:0007669"/>
    <property type="project" value="TreeGrafter"/>
</dbReference>
<dbReference type="GO" id="GO:0046872">
    <property type="term" value="F:metal ion binding"/>
    <property type="evidence" value="ECO:0007669"/>
    <property type="project" value="UniProtKB-UniRule"/>
</dbReference>
<dbReference type="GO" id="GO:0000166">
    <property type="term" value="F:nucleotide binding"/>
    <property type="evidence" value="ECO:0007669"/>
    <property type="project" value="UniProtKB-KW"/>
</dbReference>
<dbReference type="FunFam" id="3.40.1210.10:FF:000001">
    <property type="entry name" value="5'/3'-nucleotidase SurE"/>
    <property type="match status" value="1"/>
</dbReference>
<dbReference type="Gene3D" id="3.40.1210.10">
    <property type="entry name" value="Survival protein SurE-like phosphatase/nucleotidase"/>
    <property type="match status" value="1"/>
</dbReference>
<dbReference type="HAMAP" id="MF_00060">
    <property type="entry name" value="SurE"/>
    <property type="match status" value="1"/>
</dbReference>
<dbReference type="InterPro" id="IPR030048">
    <property type="entry name" value="SurE"/>
</dbReference>
<dbReference type="InterPro" id="IPR002828">
    <property type="entry name" value="SurE-like_Pase/nucleotidase"/>
</dbReference>
<dbReference type="InterPro" id="IPR036523">
    <property type="entry name" value="SurE-like_sf"/>
</dbReference>
<dbReference type="NCBIfam" id="NF001490">
    <property type="entry name" value="PRK00346.1-4"/>
    <property type="match status" value="1"/>
</dbReference>
<dbReference type="NCBIfam" id="TIGR00087">
    <property type="entry name" value="surE"/>
    <property type="match status" value="1"/>
</dbReference>
<dbReference type="PANTHER" id="PTHR30457">
    <property type="entry name" value="5'-NUCLEOTIDASE SURE"/>
    <property type="match status" value="1"/>
</dbReference>
<dbReference type="PANTHER" id="PTHR30457:SF12">
    <property type="entry name" value="5'_3'-NUCLEOTIDASE SURE"/>
    <property type="match status" value="1"/>
</dbReference>
<dbReference type="Pfam" id="PF01975">
    <property type="entry name" value="SurE"/>
    <property type="match status" value="1"/>
</dbReference>
<dbReference type="SUPFAM" id="SSF64167">
    <property type="entry name" value="SurE-like"/>
    <property type="match status" value="1"/>
</dbReference>
<sequence>MNILIANDDGVFAPGIQALADALKPLGRVVVVAPESERSGFSSALTLDRPLRPIQIAEDVWAVNGTPADCVYLSMNGLFDFEFDLVVSGINSGANLGDDVLYSGTVGAAFEGRLMKQPAIAVSLAGPDVRSYDHKDDYAQAAKWVHDFIAKGLPALPPRHIFNINIPDVPQLKGTQITYQGRRAQSKPITSHVDPRGRQVYWIGLAGEAVTDPQRIASQIQSDFFAVANSFVSVTPIQMDATNYAVLEDLQASLG</sequence>
<protein>
    <recommendedName>
        <fullName evidence="1">5'-nucleotidase SurE</fullName>
        <ecNumber evidence="1">3.1.3.5</ecNumber>
    </recommendedName>
    <alternativeName>
        <fullName evidence="1">Nucleoside 5'-monophosphate phosphohydrolase</fullName>
    </alternativeName>
</protein>